<accession>Q8VGI6</accession>
<keyword id="KW-1003">Cell membrane</keyword>
<keyword id="KW-1015">Disulfide bond</keyword>
<keyword id="KW-0297">G-protein coupled receptor</keyword>
<keyword id="KW-0325">Glycoprotein</keyword>
<keyword id="KW-0472">Membrane</keyword>
<keyword id="KW-0552">Olfaction</keyword>
<keyword id="KW-0675">Receptor</keyword>
<keyword id="KW-1185">Reference proteome</keyword>
<keyword id="KW-0716">Sensory transduction</keyword>
<keyword id="KW-0807">Transducer</keyword>
<keyword id="KW-0812">Transmembrane</keyword>
<keyword id="KW-1133">Transmembrane helix</keyword>
<reference key="1">
    <citation type="journal article" date="2002" name="Nat. Neurosci.">
        <title>The olfactory receptor gene superfamily of the mouse.</title>
        <authorList>
            <person name="Zhang X."/>
            <person name="Firestein S."/>
        </authorList>
    </citation>
    <scope>NUCLEOTIDE SEQUENCE [GENOMIC DNA]</scope>
</reference>
<reference key="2">
    <citation type="journal article" date="2002" name="Hum. Mol. Genet.">
        <title>Different evolutionary processes shaped the mouse and human olfactory receptor gene families.</title>
        <authorList>
            <person name="Young J.M."/>
            <person name="Friedman C."/>
            <person name="Williams E.M."/>
            <person name="Ross J.A."/>
            <person name="Tonnes-Priddy L."/>
            <person name="Trask B.J."/>
        </authorList>
    </citation>
    <scope>NUCLEOTIDE SEQUENCE [GENOMIC DNA]</scope>
</reference>
<reference key="3">
    <citation type="journal article" date="2002" name="Hum. Mol. Genet.">
        <authorList>
            <person name="Young J.M."/>
            <person name="Friedman C."/>
            <person name="Williams E.M."/>
            <person name="Ross J.A."/>
            <person name="Tonnes-Priddy L."/>
            <person name="Trask B.J."/>
        </authorList>
    </citation>
    <scope>ERRATUM OF PUBMED:11875048</scope>
</reference>
<protein>
    <recommendedName>
        <fullName evidence="3">Olfactory receptor 5P56</fullName>
    </recommendedName>
    <alternativeName>
        <fullName>Olfactory receptor 204-1</fullName>
    </alternativeName>
    <alternativeName>
        <fullName>Olfactory receptor 477</fullName>
    </alternativeName>
</protein>
<sequence length="310" mass="34141">MEAQNHTTVKEFILLGLTENSTLRVILFMIFLGIYTVTLVGNFSIISLIRSCPQLHTPMYLFLSHLALVDIGFSTSITPIMLTGFLGHTVTLSVAACVAQFCIAVTFGTVECFLLAVMAYDRYVAICSPLLYSTHMSPRICFLLVGASYVGGCVNSGTFTSCLLILSFCGPNQIDHFFCDFPAVLKLSCSDVSIIGIIPSISAGSIIVITVFVIAVSYTYILITILNMRSTEGRHKAFSTCTSHLTAVTLYYGTITFIYVMPKSNYSTAQNKILSVFYTVVIPMLNPLIYSLRNRDVKEALRKAIIRIFP</sequence>
<organism>
    <name type="scientific">Mus musculus</name>
    <name type="common">Mouse</name>
    <dbReference type="NCBI Taxonomy" id="10090"/>
    <lineage>
        <taxon>Eukaryota</taxon>
        <taxon>Metazoa</taxon>
        <taxon>Chordata</taxon>
        <taxon>Craniata</taxon>
        <taxon>Vertebrata</taxon>
        <taxon>Euteleostomi</taxon>
        <taxon>Mammalia</taxon>
        <taxon>Eutheria</taxon>
        <taxon>Euarchontoglires</taxon>
        <taxon>Glires</taxon>
        <taxon>Rodentia</taxon>
        <taxon>Myomorpha</taxon>
        <taxon>Muroidea</taxon>
        <taxon>Muridae</taxon>
        <taxon>Murinae</taxon>
        <taxon>Mus</taxon>
        <taxon>Mus</taxon>
    </lineage>
</organism>
<feature type="chain" id="PRO_0000150836" description="Olfactory receptor 5P56">
    <location>
        <begin position="1"/>
        <end position="310"/>
    </location>
</feature>
<feature type="topological domain" description="Extracellular" evidence="1">
    <location>
        <begin position="1"/>
        <end position="25"/>
    </location>
</feature>
<feature type="transmembrane region" description="Helical; Name=1" evidence="1">
    <location>
        <begin position="26"/>
        <end position="46"/>
    </location>
</feature>
<feature type="topological domain" description="Cytoplasmic" evidence="1">
    <location>
        <begin position="47"/>
        <end position="54"/>
    </location>
</feature>
<feature type="transmembrane region" description="Helical; Name=2" evidence="1">
    <location>
        <begin position="55"/>
        <end position="75"/>
    </location>
</feature>
<feature type="topological domain" description="Extracellular" evidence="1">
    <location>
        <begin position="76"/>
        <end position="99"/>
    </location>
</feature>
<feature type="transmembrane region" description="Helical; Name=3" evidence="1">
    <location>
        <begin position="100"/>
        <end position="120"/>
    </location>
</feature>
<feature type="topological domain" description="Cytoplasmic" evidence="1">
    <location>
        <begin position="121"/>
        <end position="133"/>
    </location>
</feature>
<feature type="transmembrane region" description="Helical; Name=4" evidence="1">
    <location>
        <begin position="134"/>
        <end position="154"/>
    </location>
</feature>
<feature type="topological domain" description="Extracellular" evidence="1">
    <location>
        <begin position="155"/>
        <end position="196"/>
    </location>
</feature>
<feature type="transmembrane region" description="Helical; Name=5" evidence="1">
    <location>
        <begin position="197"/>
        <end position="217"/>
    </location>
</feature>
<feature type="topological domain" description="Cytoplasmic" evidence="1">
    <location>
        <begin position="218"/>
        <end position="237"/>
    </location>
</feature>
<feature type="transmembrane region" description="Helical; Name=6" evidence="1">
    <location>
        <begin position="238"/>
        <end position="258"/>
    </location>
</feature>
<feature type="topological domain" description="Extracellular" evidence="1">
    <location>
        <begin position="259"/>
        <end position="271"/>
    </location>
</feature>
<feature type="transmembrane region" description="Helical; Name=7" evidence="1">
    <location>
        <begin position="272"/>
        <end position="292"/>
    </location>
</feature>
<feature type="topological domain" description="Cytoplasmic" evidence="1">
    <location>
        <begin position="293"/>
        <end position="310"/>
    </location>
</feature>
<feature type="glycosylation site" description="N-linked (GlcNAc...) asparagine" evidence="1">
    <location>
        <position position="5"/>
    </location>
</feature>
<feature type="glycosylation site" description="N-linked (GlcNAc...) asparagine" evidence="1">
    <location>
        <position position="20"/>
    </location>
</feature>
<feature type="glycosylation site" description="N-linked (GlcNAc...) asparagine" evidence="1">
    <location>
        <position position="265"/>
    </location>
</feature>
<feature type="disulfide bond" evidence="2">
    <location>
        <begin position="97"/>
        <end position="189"/>
    </location>
</feature>
<evidence type="ECO:0000255" key="1"/>
<evidence type="ECO:0000255" key="2">
    <source>
        <dbReference type="PROSITE-ProRule" id="PRU00521"/>
    </source>
</evidence>
<evidence type="ECO:0000305" key="3"/>
<evidence type="ECO:0000312" key="4">
    <source>
        <dbReference type="MGI" id="MGI:3030311"/>
    </source>
</evidence>
<comment type="function">
    <text>Potential odorant receptor.</text>
</comment>
<comment type="subcellular location">
    <subcellularLocation>
        <location evidence="3">Cell membrane</location>
        <topology evidence="1">Multi-pass membrane protein</topology>
    </subcellularLocation>
</comment>
<comment type="similarity">
    <text evidence="2">Belongs to the G-protein coupled receptor 1 family.</text>
</comment>
<gene>
    <name evidence="4" type="primary">Or5p56</name>
    <name evidence="4" type="synonym">Mor204-1</name>
    <name evidence="4" type="synonym">Olfr477</name>
</gene>
<name>O5P56_MOUSE</name>
<proteinExistence type="inferred from homology"/>
<dbReference type="EMBL" id="AY073162">
    <property type="protein sequence ID" value="AAL60825.1"/>
    <property type="molecule type" value="Genomic_DNA"/>
</dbReference>
<dbReference type="EMBL" id="AY317585">
    <property type="protein sequence ID" value="AAP70981.1"/>
    <property type="molecule type" value="Genomic_DNA"/>
</dbReference>
<dbReference type="CCDS" id="CCDS21699.1"/>
<dbReference type="RefSeq" id="NP_667137.1">
    <property type="nucleotide sequence ID" value="NM_146926.1"/>
</dbReference>
<dbReference type="SMR" id="Q8VGI6"/>
<dbReference type="FunCoup" id="Q8VGI6">
    <property type="interactions" value="1128"/>
</dbReference>
<dbReference type="STRING" id="10090.ENSMUSP00000150605"/>
<dbReference type="GlyCosmos" id="Q8VGI6">
    <property type="glycosylation" value="3 sites, No reported glycans"/>
</dbReference>
<dbReference type="GlyGen" id="Q8VGI6">
    <property type="glycosylation" value="3 sites"/>
</dbReference>
<dbReference type="iPTMnet" id="Q8VGI6"/>
<dbReference type="PhosphoSitePlus" id="Q8VGI6"/>
<dbReference type="PaxDb" id="10090-ENSMUSP00000091654"/>
<dbReference type="DNASU" id="258928"/>
<dbReference type="Ensembl" id="ENSMUST00000091605.3">
    <property type="protein sequence ID" value="ENSMUSP00000091654.2"/>
    <property type="gene ID" value="ENSMUSG00000096151.3"/>
</dbReference>
<dbReference type="Ensembl" id="ENSMUST00000214677.2">
    <property type="protein sequence ID" value="ENSMUSP00000150605.2"/>
    <property type="gene ID" value="ENSMUSG00000096151.3"/>
</dbReference>
<dbReference type="GeneID" id="258928"/>
<dbReference type="KEGG" id="mmu:258928"/>
<dbReference type="UCSC" id="uc009jbs.1">
    <property type="organism name" value="mouse"/>
</dbReference>
<dbReference type="AGR" id="MGI:3030311"/>
<dbReference type="CTD" id="258928"/>
<dbReference type="MGI" id="MGI:3030311">
    <property type="gene designation" value="Or5p56"/>
</dbReference>
<dbReference type="VEuPathDB" id="HostDB:ENSMUSG00000096151"/>
<dbReference type="eggNOG" id="ENOG502SKA1">
    <property type="taxonomic scope" value="Eukaryota"/>
</dbReference>
<dbReference type="GeneTree" id="ENSGT01130000278279"/>
<dbReference type="HOGENOM" id="CLU_012526_1_0_1"/>
<dbReference type="InParanoid" id="Q8VGI6"/>
<dbReference type="OMA" id="MMAQERY"/>
<dbReference type="OrthoDB" id="9598168at2759"/>
<dbReference type="PhylomeDB" id="Q8VGI6"/>
<dbReference type="TreeFam" id="TF338848"/>
<dbReference type="BioGRID-ORCS" id="258928">
    <property type="hits" value="1 hit in 51 CRISPR screens"/>
</dbReference>
<dbReference type="PRO" id="PR:Q8VGI6"/>
<dbReference type="Proteomes" id="UP000000589">
    <property type="component" value="Chromosome 7"/>
</dbReference>
<dbReference type="RNAct" id="Q8VGI6">
    <property type="molecule type" value="protein"/>
</dbReference>
<dbReference type="GO" id="GO:0016020">
    <property type="term" value="C:membrane"/>
    <property type="evidence" value="ECO:0000247"/>
    <property type="project" value="MGI"/>
</dbReference>
<dbReference type="GO" id="GO:0005886">
    <property type="term" value="C:plasma membrane"/>
    <property type="evidence" value="ECO:0007669"/>
    <property type="project" value="UniProtKB-SubCell"/>
</dbReference>
<dbReference type="GO" id="GO:0004930">
    <property type="term" value="F:G protein-coupled receptor activity"/>
    <property type="evidence" value="ECO:0007669"/>
    <property type="project" value="UniProtKB-KW"/>
</dbReference>
<dbReference type="GO" id="GO:0004984">
    <property type="term" value="F:olfactory receptor activity"/>
    <property type="evidence" value="ECO:0000247"/>
    <property type="project" value="MGI"/>
</dbReference>
<dbReference type="GO" id="GO:0007186">
    <property type="term" value="P:G protein-coupled receptor signaling pathway"/>
    <property type="evidence" value="ECO:0000247"/>
    <property type="project" value="MGI"/>
</dbReference>
<dbReference type="GO" id="GO:0007608">
    <property type="term" value="P:sensory perception of smell"/>
    <property type="evidence" value="ECO:0000247"/>
    <property type="project" value="MGI"/>
</dbReference>
<dbReference type="FunFam" id="1.20.1070.10:FF:000004">
    <property type="entry name" value="Olfactory receptor"/>
    <property type="match status" value="1"/>
</dbReference>
<dbReference type="Gene3D" id="1.20.1070.10">
    <property type="entry name" value="Rhodopsin 7-helix transmembrane proteins"/>
    <property type="match status" value="1"/>
</dbReference>
<dbReference type="InterPro" id="IPR000276">
    <property type="entry name" value="GPCR_Rhodpsn"/>
</dbReference>
<dbReference type="InterPro" id="IPR017452">
    <property type="entry name" value="GPCR_Rhodpsn_7TM"/>
</dbReference>
<dbReference type="InterPro" id="IPR000725">
    <property type="entry name" value="Olfact_rcpt"/>
</dbReference>
<dbReference type="PANTHER" id="PTHR48018">
    <property type="entry name" value="OLFACTORY RECEPTOR"/>
    <property type="match status" value="1"/>
</dbReference>
<dbReference type="Pfam" id="PF13853">
    <property type="entry name" value="7tm_4"/>
    <property type="match status" value="1"/>
</dbReference>
<dbReference type="PRINTS" id="PR00237">
    <property type="entry name" value="GPCRRHODOPSN"/>
</dbReference>
<dbReference type="PRINTS" id="PR00245">
    <property type="entry name" value="OLFACTORYR"/>
</dbReference>
<dbReference type="SUPFAM" id="SSF81321">
    <property type="entry name" value="Family A G protein-coupled receptor-like"/>
    <property type="match status" value="1"/>
</dbReference>
<dbReference type="PROSITE" id="PS00237">
    <property type="entry name" value="G_PROTEIN_RECEP_F1_1"/>
    <property type="match status" value="1"/>
</dbReference>
<dbReference type="PROSITE" id="PS50262">
    <property type="entry name" value="G_PROTEIN_RECEP_F1_2"/>
    <property type="match status" value="1"/>
</dbReference>